<sequence length="129" mass="13879">MAKEPTRVRRRERKNIVSGVAHVNASFNNTMITITDAQGNTISWSSAGAMGFKGSRKSTPYAAQVAAEDAGRKAAEHGMRTLEVEVSGPGSGRESALRALQAAGFTVTSIRDVTSIPHNGCRPRKRRRV</sequence>
<accession>B1Z770</accession>
<proteinExistence type="inferred from homology"/>
<evidence type="ECO:0000255" key="1">
    <source>
        <dbReference type="HAMAP-Rule" id="MF_01310"/>
    </source>
</evidence>
<evidence type="ECO:0000305" key="2"/>
<comment type="function">
    <text evidence="1">Located on the platform of the 30S subunit, it bridges several disparate RNA helices of the 16S rRNA. Forms part of the Shine-Dalgarno cleft in the 70S ribosome.</text>
</comment>
<comment type="subunit">
    <text evidence="1">Part of the 30S ribosomal subunit. Interacts with proteins S7 and S18. Binds to IF-3.</text>
</comment>
<comment type="similarity">
    <text evidence="1">Belongs to the universal ribosomal protein uS11 family.</text>
</comment>
<organism>
    <name type="scientific">Methylorubrum populi (strain ATCC BAA-705 / NCIMB 13946 / BJ001)</name>
    <name type="common">Methylobacterium populi</name>
    <dbReference type="NCBI Taxonomy" id="441620"/>
    <lineage>
        <taxon>Bacteria</taxon>
        <taxon>Pseudomonadati</taxon>
        <taxon>Pseudomonadota</taxon>
        <taxon>Alphaproteobacteria</taxon>
        <taxon>Hyphomicrobiales</taxon>
        <taxon>Methylobacteriaceae</taxon>
        <taxon>Methylorubrum</taxon>
    </lineage>
</organism>
<keyword id="KW-0687">Ribonucleoprotein</keyword>
<keyword id="KW-0689">Ribosomal protein</keyword>
<keyword id="KW-0694">RNA-binding</keyword>
<keyword id="KW-0699">rRNA-binding</keyword>
<reference key="1">
    <citation type="submission" date="2008-04" db="EMBL/GenBank/DDBJ databases">
        <title>Complete sequence of chromosome of Methylobacterium populi BJ001.</title>
        <authorList>
            <consortium name="US DOE Joint Genome Institute"/>
            <person name="Copeland A."/>
            <person name="Lucas S."/>
            <person name="Lapidus A."/>
            <person name="Glavina del Rio T."/>
            <person name="Dalin E."/>
            <person name="Tice H."/>
            <person name="Bruce D."/>
            <person name="Goodwin L."/>
            <person name="Pitluck S."/>
            <person name="Chertkov O."/>
            <person name="Brettin T."/>
            <person name="Detter J.C."/>
            <person name="Han C."/>
            <person name="Kuske C.R."/>
            <person name="Schmutz J."/>
            <person name="Larimer F."/>
            <person name="Land M."/>
            <person name="Hauser L."/>
            <person name="Kyrpides N."/>
            <person name="Mikhailova N."/>
            <person name="Marx C."/>
            <person name="Richardson P."/>
        </authorList>
    </citation>
    <scope>NUCLEOTIDE SEQUENCE [LARGE SCALE GENOMIC DNA]</scope>
    <source>
        <strain>ATCC BAA-705 / NCIMB 13946 / BJ001</strain>
    </source>
</reference>
<dbReference type="EMBL" id="CP001029">
    <property type="protein sequence ID" value="ACB80303.1"/>
    <property type="molecule type" value="Genomic_DNA"/>
</dbReference>
<dbReference type="RefSeq" id="WP_009866710.1">
    <property type="nucleotide sequence ID" value="NC_010725.1"/>
</dbReference>
<dbReference type="SMR" id="B1Z770"/>
<dbReference type="STRING" id="441620.Mpop_2141"/>
<dbReference type="KEGG" id="mpo:Mpop_2141"/>
<dbReference type="eggNOG" id="COG0100">
    <property type="taxonomic scope" value="Bacteria"/>
</dbReference>
<dbReference type="HOGENOM" id="CLU_072439_5_0_5"/>
<dbReference type="OrthoDB" id="9806415at2"/>
<dbReference type="Proteomes" id="UP000007136">
    <property type="component" value="Chromosome"/>
</dbReference>
<dbReference type="GO" id="GO:1990904">
    <property type="term" value="C:ribonucleoprotein complex"/>
    <property type="evidence" value="ECO:0007669"/>
    <property type="project" value="UniProtKB-KW"/>
</dbReference>
<dbReference type="GO" id="GO:0005840">
    <property type="term" value="C:ribosome"/>
    <property type="evidence" value="ECO:0007669"/>
    <property type="project" value="UniProtKB-KW"/>
</dbReference>
<dbReference type="GO" id="GO:0019843">
    <property type="term" value="F:rRNA binding"/>
    <property type="evidence" value="ECO:0007669"/>
    <property type="project" value="UniProtKB-UniRule"/>
</dbReference>
<dbReference type="GO" id="GO:0003735">
    <property type="term" value="F:structural constituent of ribosome"/>
    <property type="evidence" value="ECO:0007669"/>
    <property type="project" value="InterPro"/>
</dbReference>
<dbReference type="GO" id="GO:0006412">
    <property type="term" value="P:translation"/>
    <property type="evidence" value="ECO:0007669"/>
    <property type="project" value="UniProtKB-UniRule"/>
</dbReference>
<dbReference type="FunFam" id="3.30.420.80:FF:000001">
    <property type="entry name" value="30S ribosomal protein S11"/>
    <property type="match status" value="1"/>
</dbReference>
<dbReference type="Gene3D" id="3.30.420.80">
    <property type="entry name" value="Ribosomal protein S11"/>
    <property type="match status" value="1"/>
</dbReference>
<dbReference type="HAMAP" id="MF_01310">
    <property type="entry name" value="Ribosomal_uS11"/>
    <property type="match status" value="1"/>
</dbReference>
<dbReference type="InterPro" id="IPR001971">
    <property type="entry name" value="Ribosomal_uS11"/>
</dbReference>
<dbReference type="InterPro" id="IPR019981">
    <property type="entry name" value="Ribosomal_uS11_bac-type"/>
</dbReference>
<dbReference type="InterPro" id="IPR018102">
    <property type="entry name" value="Ribosomal_uS11_CS"/>
</dbReference>
<dbReference type="InterPro" id="IPR036967">
    <property type="entry name" value="Ribosomal_uS11_sf"/>
</dbReference>
<dbReference type="NCBIfam" id="NF003698">
    <property type="entry name" value="PRK05309.1"/>
    <property type="match status" value="1"/>
</dbReference>
<dbReference type="NCBIfam" id="TIGR03632">
    <property type="entry name" value="uS11_bact"/>
    <property type="match status" value="1"/>
</dbReference>
<dbReference type="PANTHER" id="PTHR11759">
    <property type="entry name" value="40S RIBOSOMAL PROTEIN S14/30S RIBOSOMAL PROTEIN S11"/>
    <property type="match status" value="1"/>
</dbReference>
<dbReference type="Pfam" id="PF00411">
    <property type="entry name" value="Ribosomal_S11"/>
    <property type="match status" value="1"/>
</dbReference>
<dbReference type="PIRSF" id="PIRSF002131">
    <property type="entry name" value="Ribosomal_S11"/>
    <property type="match status" value="1"/>
</dbReference>
<dbReference type="SUPFAM" id="SSF53137">
    <property type="entry name" value="Translational machinery components"/>
    <property type="match status" value="1"/>
</dbReference>
<dbReference type="PROSITE" id="PS00054">
    <property type="entry name" value="RIBOSOMAL_S11"/>
    <property type="match status" value="1"/>
</dbReference>
<gene>
    <name evidence="1" type="primary">rpsK</name>
    <name type="ordered locus">Mpop_2141</name>
</gene>
<name>RS11_METPB</name>
<feature type="chain" id="PRO_1000141109" description="Small ribosomal subunit protein uS11">
    <location>
        <begin position="1"/>
        <end position="129"/>
    </location>
</feature>
<protein>
    <recommendedName>
        <fullName evidence="1">Small ribosomal subunit protein uS11</fullName>
    </recommendedName>
    <alternativeName>
        <fullName evidence="2">30S ribosomal protein S11</fullName>
    </alternativeName>
</protein>